<reference key="1">
    <citation type="journal article" date="1999" name="J. Biochem.">
        <title>Isolation and amino acid sequence of a phospholipase A2 inhibitor from the blood plasma of the sea krait, Laticauda semifasciata.</title>
        <authorList>
            <person name="Ohkura N."/>
            <person name="Kitahara Y."/>
            <person name="Inoue S."/>
            <person name="Ikeda K."/>
            <person name="Hayashi K."/>
        </authorList>
    </citation>
    <scope>PROTEIN SEQUENCE</scope>
    <scope>FUNCTION</scope>
    <scope>SUBCELLULAR LOCATION</scope>
    <scope>SUBUNIT</scope>
    <scope>GLYCOSYLATION AT ASN-157</scope>
    <source>
        <tissue>Plasma</tissue>
    </source>
</reference>
<feature type="chain" id="PRO_0000452703" description="Phospholipase A2 inhibitor gamma subunit A" evidence="3">
    <location>
        <begin position="1"/>
        <end position="182"/>
    </location>
</feature>
<feature type="glycosylation site" description="N-linked (GlcNAc...) asparagine" evidence="2">
    <location>
        <position position="157"/>
    </location>
</feature>
<feature type="disulfide bond" evidence="1">
    <location>
        <begin position="3"/>
        <end position="27"/>
    </location>
</feature>
<feature type="disulfide bond" evidence="1">
    <location>
        <begin position="6"/>
        <end position="13"/>
    </location>
</feature>
<feature type="disulfide bond" evidence="1">
    <location>
        <begin position="20"/>
        <end position="48"/>
    </location>
</feature>
<feature type="disulfide bond" evidence="1">
    <location>
        <begin position="54"/>
        <end position="75"/>
    </location>
</feature>
<feature type="disulfide bond" evidence="1">
    <location>
        <begin position="76"/>
        <end position="81"/>
    </location>
</feature>
<feature type="disulfide bond" evidence="1">
    <location>
        <begin position="99"/>
        <end position="124"/>
    </location>
</feature>
<feature type="disulfide bond" evidence="1">
    <location>
        <begin position="117"/>
        <end position="146"/>
    </location>
</feature>
<feature type="disulfide bond" evidence="1">
    <location>
        <begin position="150"/>
        <end position="172"/>
    </location>
</feature>
<sequence length="182" mass="20301">RSCEICHNFGADCESRAEECDSPEDQCGTVLLEVSQAPISFRTIHKNCFSSSLCKLERFDINIGHDSFMRGRIHCCDEEKCEGLQFPGLPLSLPNGYYCPGILGLFTVDSSEHEAICRGTETKCINIAGFRKERYPADIAYNIKGCVSSCPELSLSNRTHEEHRNDLIKVECTDASKIIPSE</sequence>
<name>PLIGA_LATSE</name>
<evidence type="ECO:0000250" key="1">
    <source>
        <dbReference type="UniProtKB" id="Q7LZI1"/>
    </source>
</evidence>
<evidence type="ECO:0000255" key="2">
    <source>
        <dbReference type="PROSITE-ProRule" id="PRU00498"/>
    </source>
</evidence>
<evidence type="ECO:0000269" key="3">
    <source>
    </source>
</evidence>
<evidence type="ECO:0000303" key="4">
    <source>
    </source>
</evidence>
<evidence type="ECO:0000305" key="5"/>
<evidence type="ECO:0000305" key="6">
    <source>
    </source>
</evidence>
<comment type="function">
    <text evidence="3">Strongly inhibits its own venom PLA2 and all other PLA2s tested including Elapid, Crotalid and Viperid venom PLA2s, as well as honeybee PLA2s.</text>
</comment>
<comment type="subunit">
    <text evidence="3">Heterotrimer of 2 subunits A and 1 subunit B.</text>
</comment>
<comment type="subcellular location">
    <subcellularLocation>
        <location evidence="3">Secreted</location>
    </subcellularLocation>
    <text evidence="3">Secreted in blood plasma.</text>
</comment>
<comment type="tissue specificity">
    <text evidence="6">Expressed by the liver.</text>
</comment>
<comment type="PTM">
    <text evidence="3">N-glycosylation is not important for activity, since deglycosylation does not change its PLA2 inhibitory activity.</text>
</comment>
<comment type="similarity">
    <text evidence="5">Belongs to the CNF-like-inhibitor family.</text>
</comment>
<organism>
    <name type="scientific">Laticauda semifasciata</name>
    <name type="common">Black-banded sea krait</name>
    <name type="synonym">Pseudolaticauda semifasciata</name>
    <dbReference type="NCBI Taxonomy" id="8631"/>
    <lineage>
        <taxon>Eukaryota</taxon>
        <taxon>Metazoa</taxon>
        <taxon>Chordata</taxon>
        <taxon>Craniata</taxon>
        <taxon>Vertebrata</taxon>
        <taxon>Euteleostomi</taxon>
        <taxon>Lepidosauria</taxon>
        <taxon>Squamata</taxon>
        <taxon>Bifurcata</taxon>
        <taxon>Unidentata</taxon>
        <taxon>Episquamata</taxon>
        <taxon>Toxicofera</taxon>
        <taxon>Serpentes</taxon>
        <taxon>Colubroidea</taxon>
        <taxon>Elapidae</taxon>
        <taxon>Laticaudinae</taxon>
        <taxon>Laticauda</taxon>
    </lineage>
</organism>
<protein>
    <recommendedName>
        <fullName evidence="5">Phospholipase A2 inhibitor gamma subunit A</fullName>
    </recommendedName>
    <alternativeName>
        <fullName evidence="4">LsPLI-gamma A</fullName>
        <shortName>PLI-gamma A</shortName>
    </alternativeName>
    <alternativeName>
        <fullName evidence="4">gamma-PLI A</fullName>
    </alternativeName>
</protein>
<proteinExistence type="evidence at protein level"/>
<keyword id="KW-0903">Direct protein sequencing</keyword>
<keyword id="KW-1015">Disulfide bond</keyword>
<keyword id="KW-0325">Glycoprotein</keyword>
<keyword id="KW-0593">Phospholipase A2 inhibitor</keyword>
<keyword id="KW-0964">Secreted</keyword>
<dbReference type="SMR" id="P0DUK5"/>
<dbReference type="GO" id="GO:0005576">
    <property type="term" value="C:extracellular region"/>
    <property type="evidence" value="ECO:0007669"/>
    <property type="project" value="UniProtKB-SubCell"/>
</dbReference>
<dbReference type="GO" id="GO:0019834">
    <property type="term" value="F:phospholipase A2 inhibitor activity"/>
    <property type="evidence" value="ECO:0007669"/>
    <property type="project" value="UniProtKB-KW"/>
</dbReference>
<dbReference type="Gene3D" id="2.10.60.10">
    <property type="entry name" value="CD59"/>
    <property type="match status" value="1"/>
</dbReference>
<dbReference type="InterPro" id="IPR050918">
    <property type="entry name" value="CNF-like_PLA2_Inhibitor"/>
</dbReference>
<dbReference type="InterPro" id="IPR016054">
    <property type="entry name" value="LY6_UPA_recep-like"/>
</dbReference>
<dbReference type="InterPro" id="IPR016338">
    <property type="entry name" value="PLipase_A2-inh_b-type"/>
</dbReference>
<dbReference type="InterPro" id="IPR004126">
    <property type="entry name" value="PLipase_A2_inh_N"/>
</dbReference>
<dbReference type="InterPro" id="IPR045860">
    <property type="entry name" value="Snake_toxin-like_sf"/>
</dbReference>
<dbReference type="PANTHER" id="PTHR20914:SF9">
    <property type="entry name" value="COILED, ISOFORM A"/>
    <property type="match status" value="1"/>
</dbReference>
<dbReference type="PANTHER" id="PTHR20914">
    <property type="entry name" value="LY6/PLAUR DOMAIN-CONTAINING PROTEIN 8"/>
    <property type="match status" value="1"/>
</dbReference>
<dbReference type="Pfam" id="PF02988">
    <property type="entry name" value="PLA2_inh"/>
    <property type="match status" value="1"/>
</dbReference>
<dbReference type="Pfam" id="PF00021">
    <property type="entry name" value="UPAR_LY6"/>
    <property type="match status" value="1"/>
</dbReference>
<dbReference type="PIRSF" id="PIRSF002023">
    <property type="entry name" value="PLA2_inhib_alpha/gamma"/>
    <property type="match status" value="1"/>
</dbReference>
<dbReference type="SMART" id="SM00134">
    <property type="entry name" value="LU"/>
    <property type="match status" value="1"/>
</dbReference>
<dbReference type="SUPFAM" id="SSF57302">
    <property type="entry name" value="Snake toxin-like"/>
    <property type="match status" value="1"/>
</dbReference>
<accession>P0DUK5</accession>